<organism evidence="5">
    <name type="scientific">Drosophila melanogaster</name>
    <name type="common">Fruit fly</name>
    <dbReference type="NCBI Taxonomy" id="7227"/>
    <lineage>
        <taxon>Eukaryota</taxon>
        <taxon>Metazoa</taxon>
        <taxon>Ecdysozoa</taxon>
        <taxon>Arthropoda</taxon>
        <taxon>Hexapoda</taxon>
        <taxon>Insecta</taxon>
        <taxon>Pterygota</taxon>
        <taxon>Neoptera</taxon>
        <taxon>Endopterygota</taxon>
        <taxon>Diptera</taxon>
        <taxon>Brachycera</taxon>
        <taxon>Muscomorpha</taxon>
        <taxon>Ephydroidea</taxon>
        <taxon>Drosophilidae</taxon>
        <taxon>Drosophila</taxon>
        <taxon>Sophophora</taxon>
    </lineage>
</organism>
<name>ESS2_DROME</name>
<proteinExistence type="evidence at protein level"/>
<keyword id="KW-0539">Nucleus</keyword>
<keyword id="KW-0597">Phosphoprotein</keyword>
<keyword id="KW-1185">Reference proteome</keyword>
<gene>
    <name type="primary">Es2</name>
    <name type="ORF">CG1474</name>
</gene>
<feature type="chain" id="PRO_0000079875" description="Splicing factor ESS-2 homolog">
    <location>
        <begin position="1"/>
        <end position="501"/>
    </location>
</feature>
<feature type="region of interest" description="Disordered" evidence="2">
    <location>
        <begin position="1"/>
        <end position="20"/>
    </location>
</feature>
<feature type="region of interest" description="Disordered" evidence="2">
    <location>
        <begin position="105"/>
        <end position="163"/>
    </location>
</feature>
<feature type="region of interest" description="Disordered" evidence="2">
    <location>
        <begin position="425"/>
        <end position="471"/>
    </location>
</feature>
<feature type="compositionally biased region" description="Low complexity" evidence="2">
    <location>
        <begin position="1"/>
        <end position="18"/>
    </location>
</feature>
<feature type="compositionally biased region" description="Low complexity" evidence="2">
    <location>
        <begin position="105"/>
        <end position="115"/>
    </location>
</feature>
<feature type="compositionally biased region" description="Polar residues" evidence="2">
    <location>
        <begin position="126"/>
        <end position="151"/>
    </location>
</feature>
<feature type="compositionally biased region" description="Basic and acidic residues" evidence="2">
    <location>
        <begin position="152"/>
        <end position="163"/>
    </location>
</feature>
<feature type="modified residue" description="Phosphoserine" evidence="3">
    <location>
        <position position="409"/>
    </location>
</feature>
<feature type="modified residue" description="Phosphoserine" evidence="3">
    <location>
        <position position="411"/>
    </location>
</feature>
<feature type="sequence conflict" description="In Ref. 3; AAL39937." evidence="4" ref="3">
    <original>R</original>
    <variation>W</variation>
    <location>
        <position position="142"/>
    </location>
</feature>
<feature type="sequence conflict" description="In Ref. 4; AAC04785." evidence="4" ref="4">
    <original>KL</original>
    <variation>NV</variation>
    <location>
        <begin position="166"/>
        <end position="167"/>
    </location>
</feature>
<feature type="sequence conflict" description="In Ref. 4; AAC04785." evidence="4" ref="4">
    <original>RNQ</original>
    <variation>PNP</variation>
    <location>
        <begin position="381"/>
        <end position="383"/>
    </location>
</feature>
<feature type="sequence conflict" description="In Ref. 4; AAC04785." evidence="4" ref="4">
    <original>S</original>
    <variation>N</variation>
    <location>
        <position position="469"/>
    </location>
</feature>
<sequence length="501" mass="56019">MSATTRTPATPGTPGTPGSLAMEVARVQNSALAEFKKPTAMVRHKNKPKILTEEKYIEEMSKIIQRDFFPDLERLRAQNDYLDAESRRDFVQMAEIRERYSLGRISGTGRSTSRRNNAMSPATFETPVSQAKCSNTPLPNSRATDTPFSTDGSEKSDAEGRDTTAKLSLDAFLQKYTSEDNQSFQEIIETAEAKLRQKYAVLYNHEKLSAEQLQRALMLPSIETQFEEPDPLRKIETWNYTNMNSIMYVPDGVEYTEEERVQLAERKQSIQHNATRLPDEAKHREMDTKKLNDEVPQNGAGGATATPKVRGFDLLRSPSPRPGEAFSPIMTWGEIDGTPFRLDGGDTPLRPTQGPSFRINENSRRENIAIALAERVSERMRNQKQMALDTARRNIGSPLIRTNMERLASMSPAAQLLATGKLGIRGTPRLRHTPSPMSGRKRKVTPGVVRSTNTPILGEPKPKQQAKISTPAKNVTIDTGSTLTDDLLKIPTKRRTAADFF</sequence>
<protein>
    <recommendedName>
        <fullName>Splicing factor ESS-2 homolog</fullName>
    </recommendedName>
    <alternativeName>
        <fullName>Protein Es2</fullName>
    </alternativeName>
    <alternativeName>
        <fullName>dEs2</fullName>
    </alternativeName>
</protein>
<comment type="subcellular location">
    <subcellularLocation>
        <location evidence="1">Nucleus</location>
    </subcellularLocation>
</comment>
<comment type="similarity">
    <text evidence="4">Belongs to the ESS2 family.</text>
</comment>
<reference evidence="4" key="1">
    <citation type="journal article" date="2000" name="Science">
        <title>The genome sequence of Drosophila melanogaster.</title>
        <authorList>
            <person name="Adams M.D."/>
            <person name="Celniker S.E."/>
            <person name="Holt R.A."/>
            <person name="Evans C.A."/>
            <person name="Gocayne J.D."/>
            <person name="Amanatides P.G."/>
            <person name="Scherer S.E."/>
            <person name="Li P.W."/>
            <person name="Hoskins R.A."/>
            <person name="Galle R.F."/>
            <person name="George R.A."/>
            <person name="Lewis S.E."/>
            <person name="Richards S."/>
            <person name="Ashburner M."/>
            <person name="Henderson S.N."/>
            <person name="Sutton G.G."/>
            <person name="Wortman J.R."/>
            <person name="Yandell M.D."/>
            <person name="Zhang Q."/>
            <person name="Chen L.X."/>
            <person name="Brandon R.C."/>
            <person name="Rogers Y.-H.C."/>
            <person name="Blazej R.G."/>
            <person name="Champe M."/>
            <person name="Pfeiffer B.D."/>
            <person name="Wan K.H."/>
            <person name="Doyle C."/>
            <person name="Baxter E.G."/>
            <person name="Helt G."/>
            <person name="Nelson C.R."/>
            <person name="Miklos G.L.G."/>
            <person name="Abril J.F."/>
            <person name="Agbayani A."/>
            <person name="An H.-J."/>
            <person name="Andrews-Pfannkoch C."/>
            <person name="Baldwin D."/>
            <person name="Ballew R.M."/>
            <person name="Basu A."/>
            <person name="Baxendale J."/>
            <person name="Bayraktaroglu L."/>
            <person name="Beasley E.M."/>
            <person name="Beeson K.Y."/>
            <person name="Benos P.V."/>
            <person name="Berman B.P."/>
            <person name="Bhandari D."/>
            <person name="Bolshakov S."/>
            <person name="Borkova D."/>
            <person name="Botchan M.R."/>
            <person name="Bouck J."/>
            <person name="Brokstein P."/>
            <person name="Brottier P."/>
            <person name="Burtis K.C."/>
            <person name="Busam D.A."/>
            <person name="Butler H."/>
            <person name="Cadieu E."/>
            <person name="Center A."/>
            <person name="Chandra I."/>
            <person name="Cherry J.M."/>
            <person name="Cawley S."/>
            <person name="Dahlke C."/>
            <person name="Davenport L.B."/>
            <person name="Davies P."/>
            <person name="de Pablos B."/>
            <person name="Delcher A."/>
            <person name="Deng Z."/>
            <person name="Mays A.D."/>
            <person name="Dew I."/>
            <person name="Dietz S.M."/>
            <person name="Dodson K."/>
            <person name="Doup L.E."/>
            <person name="Downes M."/>
            <person name="Dugan-Rocha S."/>
            <person name="Dunkov B.C."/>
            <person name="Dunn P."/>
            <person name="Durbin K.J."/>
            <person name="Evangelista C.C."/>
            <person name="Ferraz C."/>
            <person name="Ferriera S."/>
            <person name="Fleischmann W."/>
            <person name="Fosler C."/>
            <person name="Gabrielian A.E."/>
            <person name="Garg N.S."/>
            <person name="Gelbart W.M."/>
            <person name="Glasser K."/>
            <person name="Glodek A."/>
            <person name="Gong F."/>
            <person name="Gorrell J.H."/>
            <person name="Gu Z."/>
            <person name="Guan P."/>
            <person name="Harris M."/>
            <person name="Harris N.L."/>
            <person name="Harvey D.A."/>
            <person name="Heiman T.J."/>
            <person name="Hernandez J.R."/>
            <person name="Houck J."/>
            <person name="Hostin D."/>
            <person name="Houston K.A."/>
            <person name="Howland T.J."/>
            <person name="Wei M.-H."/>
            <person name="Ibegwam C."/>
            <person name="Jalali M."/>
            <person name="Kalush F."/>
            <person name="Karpen G.H."/>
            <person name="Ke Z."/>
            <person name="Kennison J.A."/>
            <person name="Ketchum K.A."/>
            <person name="Kimmel B.E."/>
            <person name="Kodira C.D."/>
            <person name="Kraft C.L."/>
            <person name="Kravitz S."/>
            <person name="Kulp D."/>
            <person name="Lai Z."/>
            <person name="Lasko P."/>
            <person name="Lei Y."/>
            <person name="Levitsky A.A."/>
            <person name="Li J.H."/>
            <person name="Li Z."/>
            <person name="Liang Y."/>
            <person name="Lin X."/>
            <person name="Liu X."/>
            <person name="Mattei B."/>
            <person name="McIntosh T.C."/>
            <person name="McLeod M.P."/>
            <person name="McPherson D."/>
            <person name="Merkulov G."/>
            <person name="Milshina N.V."/>
            <person name="Mobarry C."/>
            <person name="Morris J."/>
            <person name="Moshrefi A."/>
            <person name="Mount S.M."/>
            <person name="Moy M."/>
            <person name="Murphy B."/>
            <person name="Murphy L."/>
            <person name="Muzny D.M."/>
            <person name="Nelson D.L."/>
            <person name="Nelson D.R."/>
            <person name="Nelson K.A."/>
            <person name="Nixon K."/>
            <person name="Nusskern D.R."/>
            <person name="Pacleb J.M."/>
            <person name="Palazzolo M."/>
            <person name="Pittman G.S."/>
            <person name="Pan S."/>
            <person name="Pollard J."/>
            <person name="Puri V."/>
            <person name="Reese M.G."/>
            <person name="Reinert K."/>
            <person name="Remington K."/>
            <person name="Saunders R.D.C."/>
            <person name="Scheeler F."/>
            <person name="Shen H."/>
            <person name="Shue B.C."/>
            <person name="Siden-Kiamos I."/>
            <person name="Simpson M."/>
            <person name="Skupski M.P."/>
            <person name="Smith T.J."/>
            <person name="Spier E."/>
            <person name="Spradling A.C."/>
            <person name="Stapleton M."/>
            <person name="Strong R."/>
            <person name="Sun E."/>
            <person name="Svirskas R."/>
            <person name="Tector C."/>
            <person name="Turner R."/>
            <person name="Venter E."/>
            <person name="Wang A.H."/>
            <person name="Wang X."/>
            <person name="Wang Z.-Y."/>
            <person name="Wassarman D.A."/>
            <person name="Weinstock G.M."/>
            <person name="Weissenbach J."/>
            <person name="Williams S.M."/>
            <person name="Woodage T."/>
            <person name="Worley K.C."/>
            <person name="Wu D."/>
            <person name="Yang S."/>
            <person name="Yao Q.A."/>
            <person name="Ye J."/>
            <person name="Yeh R.-F."/>
            <person name="Zaveri J.S."/>
            <person name="Zhan M."/>
            <person name="Zhang G."/>
            <person name="Zhao Q."/>
            <person name="Zheng L."/>
            <person name="Zheng X.H."/>
            <person name="Zhong F.N."/>
            <person name="Zhong W."/>
            <person name="Zhou X."/>
            <person name="Zhu S.C."/>
            <person name="Zhu X."/>
            <person name="Smith H.O."/>
            <person name="Gibbs R.A."/>
            <person name="Myers E.W."/>
            <person name="Rubin G.M."/>
            <person name="Venter J.C."/>
        </authorList>
    </citation>
    <scope>NUCLEOTIDE SEQUENCE [LARGE SCALE GENOMIC DNA]</scope>
    <source>
        <strain>Berkeley</strain>
    </source>
</reference>
<reference key="2">
    <citation type="journal article" date="2002" name="Genome Biol.">
        <title>Annotation of the Drosophila melanogaster euchromatic genome: a systematic review.</title>
        <authorList>
            <person name="Misra S."/>
            <person name="Crosby M.A."/>
            <person name="Mungall C.J."/>
            <person name="Matthews B.B."/>
            <person name="Campbell K.S."/>
            <person name="Hradecky P."/>
            <person name="Huang Y."/>
            <person name="Kaminker J.S."/>
            <person name="Millburn G.H."/>
            <person name="Prochnik S.E."/>
            <person name="Smith C.D."/>
            <person name="Tupy J.L."/>
            <person name="Whitfield E.J."/>
            <person name="Bayraktaroglu L."/>
            <person name="Berman B.P."/>
            <person name="Bettencourt B.R."/>
            <person name="Celniker S.E."/>
            <person name="de Grey A.D.N.J."/>
            <person name="Drysdale R.A."/>
            <person name="Harris N.L."/>
            <person name="Richter J."/>
            <person name="Russo S."/>
            <person name="Schroeder A.J."/>
            <person name="Shu S.Q."/>
            <person name="Stapleton M."/>
            <person name="Yamada C."/>
            <person name="Ashburner M."/>
            <person name="Gelbart W.M."/>
            <person name="Rubin G.M."/>
            <person name="Lewis S.E."/>
        </authorList>
    </citation>
    <scope>GENOME REANNOTATION</scope>
    <source>
        <strain>Berkeley</strain>
    </source>
</reference>
<reference key="3">
    <citation type="journal article" date="2002" name="Genome Biol.">
        <title>A Drosophila full-length cDNA resource.</title>
        <authorList>
            <person name="Stapleton M."/>
            <person name="Carlson J.W."/>
            <person name="Brokstein P."/>
            <person name="Yu C."/>
            <person name="Champe M."/>
            <person name="George R.A."/>
            <person name="Guarin H."/>
            <person name="Kronmiller B."/>
            <person name="Pacleb J.M."/>
            <person name="Park S."/>
            <person name="Wan K.H."/>
            <person name="Rubin G.M."/>
            <person name="Celniker S.E."/>
        </authorList>
    </citation>
    <scope>NUCLEOTIDE SEQUENCE [LARGE SCALE MRNA]</scope>
    <source>
        <strain>Berkeley</strain>
        <tissue>Embryo</tissue>
    </source>
</reference>
<reference evidence="4" key="4">
    <citation type="journal article" date="1998" name="Hum. Mol. Genet.">
        <title>ES2, a gene deleted in DiGeorge syndrome, encodes a nuclear protein and is expressed during early mouse development, where it shares an expression domain with a Goosecoid-like gene.</title>
        <authorList>
            <person name="Lindsay E.A."/>
            <person name="Harvey E.L."/>
            <person name="Scambler P.J."/>
            <person name="Baldini A.B."/>
        </authorList>
    </citation>
    <scope>NUCLEOTIDE SEQUENCE [MRNA] OF 88-501</scope>
    <source>
        <tissue>Embryo</tissue>
    </source>
</reference>
<reference key="5">
    <citation type="journal article" date="2008" name="J. Proteome Res.">
        <title>Phosphoproteome analysis of Drosophila melanogaster embryos.</title>
        <authorList>
            <person name="Zhai B."/>
            <person name="Villen J."/>
            <person name="Beausoleil S.A."/>
            <person name="Mintseris J."/>
            <person name="Gygi S.P."/>
        </authorList>
    </citation>
    <scope>PHOSPHORYLATION [LARGE SCALE ANALYSIS] AT SER-409 AND SER-411</scope>
    <scope>IDENTIFICATION BY MASS SPECTROMETRY</scope>
    <source>
        <tissue>Embryo</tissue>
    </source>
</reference>
<accession>O44424</accession>
<accession>Q8T9F3</accession>
<accession>Q9W3F2</accession>
<evidence type="ECO:0000250" key="1">
    <source>
        <dbReference type="UniProtKB" id="P34420"/>
    </source>
</evidence>
<evidence type="ECO:0000256" key="2">
    <source>
        <dbReference type="SAM" id="MobiDB-lite"/>
    </source>
</evidence>
<evidence type="ECO:0000269" key="3">
    <source>
    </source>
</evidence>
<evidence type="ECO:0000305" key="4"/>
<evidence type="ECO:0000312" key="5">
    <source>
        <dbReference type="EMBL" id="AAL39937.1"/>
    </source>
</evidence>
<dbReference type="EMBL" id="AE014298">
    <property type="protein sequence ID" value="AAF46375.1"/>
    <property type="molecule type" value="Genomic_DNA"/>
</dbReference>
<dbReference type="EMBL" id="AY069792">
    <property type="protein sequence ID" value="AAL39937.1"/>
    <property type="molecule type" value="mRNA"/>
</dbReference>
<dbReference type="EMBL" id="AF037257">
    <property type="protein sequence ID" value="AAC04785.1"/>
    <property type="molecule type" value="mRNA"/>
</dbReference>
<dbReference type="RefSeq" id="NP_572480.1">
    <property type="nucleotide sequence ID" value="NM_132252.5"/>
</dbReference>
<dbReference type="SMR" id="O44424"/>
<dbReference type="BioGRID" id="58239">
    <property type="interactions" value="38"/>
</dbReference>
<dbReference type="DIP" id="DIP-18468N"/>
<dbReference type="FunCoup" id="O44424">
    <property type="interactions" value="1376"/>
</dbReference>
<dbReference type="IntAct" id="O44424">
    <property type="interactions" value="11"/>
</dbReference>
<dbReference type="STRING" id="7227.FBpp0071145"/>
<dbReference type="GlyGen" id="O44424">
    <property type="glycosylation" value="4 sites"/>
</dbReference>
<dbReference type="iPTMnet" id="O44424"/>
<dbReference type="PaxDb" id="7227-FBpp0071145"/>
<dbReference type="DNASU" id="31780"/>
<dbReference type="EnsemblMetazoa" id="FBtr0071198">
    <property type="protein sequence ID" value="FBpp0071145"/>
    <property type="gene ID" value="FBgn0023506"/>
</dbReference>
<dbReference type="GeneID" id="31780"/>
<dbReference type="KEGG" id="dme:Dmel_CG1474"/>
<dbReference type="UCSC" id="CG1474-RA">
    <property type="organism name" value="d. melanogaster"/>
</dbReference>
<dbReference type="AGR" id="FB:FBgn0023506"/>
<dbReference type="CTD" id="109579"/>
<dbReference type="FlyBase" id="FBgn0023506">
    <property type="gene designation" value="Es2"/>
</dbReference>
<dbReference type="VEuPathDB" id="VectorBase:FBgn0023506"/>
<dbReference type="eggNOG" id="KOG2627">
    <property type="taxonomic scope" value="Eukaryota"/>
</dbReference>
<dbReference type="GeneTree" id="ENSGT00390000009387"/>
<dbReference type="HOGENOM" id="CLU_024820_0_1_1"/>
<dbReference type="InParanoid" id="O44424"/>
<dbReference type="OMA" id="AQNDYLD"/>
<dbReference type="OrthoDB" id="19679at2759"/>
<dbReference type="PhylomeDB" id="O44424"/>
<dbReference type="SignaLink" id="O44424"/>
<dbReference type="BioGRID-ORCS" id="31780">
    <property type="hits" value="0 hits in 1 CRISPR screen"/>
</dbReference>
<dbReference type="GenomeRNAi" id="31780"/>
<dbReference type="PRO" id="PR:O44424"/>
<dbReference type="Proteomes" id="UP000000803">
    <property type="component" value="Chromosome X"/>
</dbReference>
<dbReference type="Bgee" id="FBgn0023506">
    <property type="expression patterns" value="Expressed in egg cell and 54 other cell types or tissues"/>
</dbReference>
<dbReference type="ExpressionAtlas" id="O44424">
    <property type="expression patterns" value="baseline and differential"/>
</dbReference>
<dbReference type="GO" id="GO:0071013">
    <property type="term" value="C:catalytic step 2 spliceosome"/>
    <property type="evidence" value="ECO:0007005"/>
    <property type="project" value="FlyBase"/>
</dbReference>
<dbReference type="GO" id="GO:0005634">
    <property type="term" value="C:nucleus"/>
    <property type="evidence" value="ECO:0000250"/>
    <property type="project" value="UniProtKB"/>
</dbReference>
<dbReference type="GO" id="GO:0000398">
    <property type="term" value="P:mRNA splicing, via spliceosome"/>
    <property type="evidence" value="ECO:0000305"/>
    <property type="project" value="FlyBase"/>
</dbReference>
<dbReference type="GO" id="GO:0007399">
    <property type="term" value="P:nervous system development"/>
    <property type="evidence" value="ECO:0000250"/>
    <property type="project" value="UniProtKB"/>
</dbReference>
<dbReference type="InterPro" id="IPR019148">
    <property type="entry name" value="Nuclear_protein_DGCR14_ESS-2"/>
</dbReference>
<dbReference type="PANTHER" id="PTHR12940">
    <property type="entry name" value="ES-2 PROTEIN - RELATED"/>
    <property type="match status" value="1"/>
</dbReference>
<dbReference type="PANTHER" id="PTHR12940:SF0">
    <property type="entry name" value="SPLICING FACTOR ESS-2 HOMOLOG"/>
    <property type="match status" value="1"/>
</dbReference>
<dbReference type="Pfam" id="PF09751">
    <property type="entry name" value="Es2"/>
    <property type="match status" value="1"/>
</dbReference>